<protein>
    <recommendedName>
        <fullName>S-adenosylmethionine synthase 1</fullName>
        <shortName>AdoMet synthase 1</shortName>
        <ecNumber evidence="5">2.5.1.6</ecNumber>
    </recommendedName>
    <alternativeName>
        <fullName>Methionine adenosyltransferase 1</fullName>
        <shortName>MAT 1</shortName>
    </alternativeName>
</protein>
<gene>
    <name type="primary">METK1</name>
    <name type="ordered locus">VIT_06s0061g00500</name>
    <name type="ORF">GSVIVT00022173001</name>
    <name type="ORF">LOC100263678</name>
    <name type="ORF">VITISV_033661</name>
</gene>
<keyword id="KW-0067">ATP-binding</keyword>
<keyword id="KW-0170">Cobalt</keyword>
<keyword id="KW-0963">Cytoplasm</keyword>
<keyword id="KW-0460">Magnesium</keyword>
<keyword id="KW-0479">Metal-binding</keyword>
<keyword id="KW-0547">Nucleotide-binding</keyword>
<keyword id="KW-0554">One-carbon metabolism</keyword>
<keyword id="KW-0630">Potassium</keyword>
<keyword id="KW-1185">Reference proteome</keyword>
<keyword id="KW-0808">Transferase</keyword>
<comment type="function">
    <text evidence="5">Catalyzes the formation of S-adenosylmethionine from methionine and ATP. The reaction comprises two steps that are both catalyzed by the same enzyme: formation of S-adenosylmethionine (AdoMet) and triphosphate, and subsequent hydrolysis of the triphosphate.</text>
</comment>
<comment type="catalytic activity">
    <reaction evidence="5">
        <text>L-methionine + ATP + H2O = S-adenosyl-L-methionine + phosphate + diphosphate</text>
        <dbReference type="Rhea" id="RHEA:21080"/>
        <dbReference type="ChEBI" id="CHEBI:15377"/>
        <dbReference type="ChEBI" id="CHEBI:30616"/>
        <dbReference type="ChEBI" id="CHEBI:33019"/>
        <dbReference type="ChEBI" id="CHEBI:43474"/>
        <dbReference type="ChEBI" id="CHEBI:57844"/>
        <dbReference type="ChEBI" id="CHEBI:59789"/>
        <dbReference type="EC" id="2.5.1.6"/>
    </reaction>
</comment>
<comment type="cofactor">
    <cofactor evidence="5">
        <name>Mn(2+)</name>
        <dbReference type="ChEBI" id="CHEBI:29035"/>
    </cofactor>
    <cofactor evidence="5">
        <name>Mg(2+)</name>
        <dbReference type="ChEBI" id="CHEBI:18420"/>
    </cofactor>
    <cofactor evidence="5">
        <name>Co(2+)</name>
        <dbReference type="ChEBI" id="CHEBI:48828"/>
    </cofactor>
    <text evidence="3 5">Binds 2 divalent ions per subunit. The metal ions interact primarily with the substrate (By similarity). Can utilize magnesium, manganese or cobalt (in vitro) (By similarity).</text>
</comment>
<comment type="cofactor">
    <cofactor evidence="5">
        <name>K(+)</name>
        <dbReference type="ChEBI" id="CHEBI:29103"/>
    </cofactor>
    <text evidence="3">Binds 1 potassium ion per subunit. The potassium ion interacts primarily with the substrate (By similarity).</text>
</comment>
<comment type="pathway">
    <text evidence="5">Amino-acid biosynthesis; S-adenosyl-L-methionine biosynthesis; S-adenosyl-L-methionine from L-methionine: step 1/1.</text>
</comment>
<comment type="subunit">
    <text evidence="1">Homotetramer.</text>
</comment>
<comment type="subcellular location">
    <subcellularLocation>
        <location evidence="1">Cytoplasm</location>
    </subcellularLocation>
</comment>
<comment type="similarity">
    <text evidence="6">Belongs to the AdoMet synthase family.</text>
</comment>
<evidence type="ECO:0000250" key="1"/>
<evidence type="ECO:0000250" key="2">
    <source>
        <dbReference type="UniProtKB" id="P0A817"/>
    </source>
</evidence>
<evidence type="ECO:0000250" key="3">
    <source>
        <dbReference type="UniProtKB" id="P13444"/>
    </source>
</evidence>
<evidence type="ECO:0000250" key="4">
    <source>
        <dbReference type="UniProtKB" id="Q00266"/>
    </source>
</evidence>
<evidence type="ECO:0000250" key="5">
    <source>
        <dbReference type="UniProtKB" id="Q96551"/>
    </source>
</evidence>
<evidence type="ECO:0000305" key="6"/>
<name>METK1_VITVI</name>
<sequence>MDTFLFTSESVNEGHPDKLCDQVSDAILDACLEQDPESKVACETCTKTNMVMVFGEITTKAKVNYEKIVRDTCRGIGFVSADVGLDADNCKVLVNIEQQSPDIAQGVHGHLTKKPEEIGAGDQGHMFGYATDETPELMPLTHVLATKLGAKLTEVRKNGTCPWLRPDGKTQVTVEYRNEGGAMVPIRVHTVLVSTQHDETVTNEQIAKDLKEHVIKPVIPPQYLDDQTIFHLNPSGRFVIGGPHGDAGLTGRKIIIDTYGGWGAHGGGAFSGKDPTKVDRSGAYIVRQAAKSVVASGLARRCIVQVSYAIGVPEPLSVFVDTYKTGKIPDKDILALIKKNFDFRPGMISINLDLKRGGNFRFQKTAAYGHFGRDDPDFSWETVKQLKPEKA</sequence>
<dbReference type="EC" id="2.5.1.6" evidence="5"/>
<dbReference type="EMBL" id="FN594957">
    <property type="protein sequence ID" value="CCB44230.1"/>
    <property type="molecule type" value="Genomic_DNA"/>
</dbReference>
<dbReference type="EMBL" id="AM449314">
    <property type="protein sequence ID" value="CAN72082.1"/>
    <property type="molecule type" value="Genomic_DNA"/>
</dbReference>
<dbReference type="RefSeq" id="XP_010651779.1">
    <property type="nucleotide sequence ID" value="XM_010653477.2"/>
</dbReference>
<dbReference type="SMR" id="A7PQS0"/>
<dbReference type="FunCoup" id="A7PQS0">
    <property type="interactions" value="2133"/>
</dbReference>
<dbReference type="STRING" id="29760.A7PQS0"/>
<dbReference type="PaxDb" id="29760-VIT_06s0061g00500.t01"/>
<dbReference type="EnsemblPlants" id="Vitvi06g01325_t001">
    <property type="protein sequence ID" value="Vitvi06g01325_P001"/>
    <property type="gene ID" value="Vitvi06g01325"/>
</dbReference>
<dbReference type="Gramene" id="Vitvi06g01325_t001">
    <property type="protein sequence ID" value="Vitvi06g01325_P001"/>
    <property type="gene ID" value="Vitvi06g01325"/>
</dbReference>
<dbReference type="eggNOG" id="KOG1506">
    <property type="taxonomic scope" value="Eukaryota"/>
</dbReference>
<dbReference type="HOGENOM" id="CLU_041802_0_1_1"/>
<dbReference type="InParanoid" id="A7PQS0"/>
<dbReference type="OrthoDB" id="5852090at2759"/>
<dbReference type="UniPathway" id="UPA00315">
    <property type="reaction ID" value="UER00080"/>
</dbReference>
<dbReference type="Proteomes" id="UP000009183">
    <property type="component" value="Chromosome 6"/>
</dbReference>
<dbReference type="ExpressionAtlas" id="A7PQS0">
    <property type="expression patterns" value="baseline"/>
</dbReference>
<dbReference type="GO" id="GO:0005829">
    <property type="term" value="C:cytosol"/>
    <property type="evidence" value="ECO:0000318"/>
    <property type="project" value="GO_Central"/>
</dbReference>
<dbReference type="GO" id="GO:0005524">
    <property type="term" value="F:ATP binding"/>
    <property type="evidence" value="ECO:0007669"/>
    <property type="project" value="UniProtKB-KW"/>
</dbReference>
<dbReference type="GO" id="GO:0046872">
    <property type="term" value="F:metal ion binding"/>
    <property type="evidence" value="ECO:0007669"/>
    <property type="project" value="UniProtKB-KW"/>
</dbReference>
<dbReference type="GO" id="GO:0004478">
    <property type="term" value="F:methionine adenosyltransferase activity"/>
    <property type="evidence" value="ECO:0000318"/>
    <property type="project" value="GO_Central"/>
</dbReference>
<dbReference type="GO" id="GO:0006730">
    <property type="term" value="P:one-carbon metabolic process"/>
    <property type="evidence" value="ECO:0007669"/>
    <property type="project" value="UniProtKB-KW"/>
</dbReference>
<dbReference type="GO" id="GO:0006556">
    <property type="term" value="P:S-adenosylmethionine biosynthetic process"/>
    <property type="evidence" value="ECO:0000318"/>
    <property type="project" value="GO_Central"/>
</dbReference>
<dbReference type="CDD" id="cd18079">
    <property type="entry name" value="S-AdoMet_synt"/>
    <property type="match status" value="1"/>
</dbReference>
<dbReference type="FunFam" id="3.30.300.10:FF:000001">
    <property type="entry name" value="S-adenosylmethionine synthase"/>
    <property type="match status" value="1"/>
</dbReference>
<dbReference type="FunFam" id="3.30.300.10:FF:000003">
    <property type="entry name" value="S-adenosylmethionine synthase"/>
    <property type="match status" value="1"/>
</dbReference>
<dbReference type="FunFam" id="3.30.300.10:FF:000004">
    <property type="entry name" value="S-adenosylmethionine synthase"/>
    <property type="match status" value="1"/>
</dbReference>
<dbReference type="Gene3D" id="3.30.300.10">
    <property type="match status" value="3"/>
</dbReference>
<dbReference type="HAMAP" id="MF_00086">
    <property type="entry name" value="S_AdoMet_synth1"/>
    <property type="match status" value="1"/>
</dbReference>
<dbReference type="InterPro" id="IPR022631">
    <property type="entry name" value="ADOMET_SYNTHASE_CS"/>
</dbReference>
<dbReference type="InterPro" id="IPR022630">
    <property type="entry name" value="S-AdoMet_synt_C"/>
</dbReference>
<dbReference type="InterPro" id="IPR022629">
    <property type="entry name" value="S-AdoMet_synt_central"/>
</dbReference>
<dbReference type="InterPro" id="IPR022628">
    <property type="entry name" value="S-AdoMet_synt_N"/>
</dbReference>
<dbReference type="InterPro" id="IPR002133">
    <property type="entry name" value="S-AdoMet_synthetase"/>
</dbReference>
<dbReference type="InterPro" id="IPR022636">
    <property type="entry name" value="S-AdoMet_synthetase_sfam"/>
</dbReference>
<dbReference type="NCBIfam" id="TIGR01034">
    <property type="entry name" value="metK"/>
    <property type="match status" value="1"/>
</dbReference>
<dbReference type="PANTHER" id="PTHR11964">
    <property type="entry name" value="S-ADENOSYLMETHIONINE SYNTHETASE"/>
    <property type="match status" value="1"/>
</dbReference>
<dbReference type="Pfam" id="PF02773">
    <property type="entry name" value="S-AdoMet_synt_C"/>
    <property type="match status" value="1"/>
</dbReference>
<dbReference type="Pfam" id="PF02772">
    <property type="entry name" value="S-AdoMet_synt_M"/>
    <property type="match status" value="1"/>
</dbReference>
<dbReference type="Pfam" id="PF00438">
    <property type="entry name" value="S-AdoMet_synt_N"/>
    <property type="match status" value="1"/>
</dbReference>
<dbReference type="PIRSF" id="PIRSF000497">
    <property type="entry name" value="MAT"/>
    <property type="match status" value="1"/>
</dbReference>
<dbReference type="SUPFAM" id="SSF55973">
    <property type="entry name" value="S-adenosylmethionine synthetase"/>
    <property type="match status" value="3"/>
</dbReference>
<dbReference type="PROSITE" id="PS00376">
    <property type="entry name" value="ADOMET_SYNTHASE_1"/>
    <property type="match status" value="1"/>
</dbReference>
<dbReference type="PROSITE" id="PS00377">
    <property type="entry name" value="ADOMET_SYNTHASE_2"/>
    <property type="match status" value="1"/>
</dbReference>
<proteinExistence type="inferred from homology"/>
<organism>
    <name type="scientific">Vitis vinifera</name>
    <name type="common">Grape</name>
    <dbReference type="NCBI Taxonomy" id="29760"/>
    <lineage>
        <taxon>Eukaryota</taxon>
        <taxon>Viridiplantae</taxon>
        <taxon>Streptophyta</taxon>
        <taxon>Embryophyta</taxon>
        <taxon>Tracheophyta</taxon>
        <taxon>Spermatophyta</taxon>
        <taxon>Magnoliopsida</taxon>
        <taxon>eudicotyledons</taxon>
        <taxon>Gunneridae</taxon>
        <taxon>Pentapetalae</taxon>
        <taxon>rosids</taxon>
        <taxon>Vitales</taxon>
        <taxon>Vitaceae</taxon>
        <taxon>Viteae</taxon>
        <taxon>Vitis</taxon>
    </lineage>
</organism>
<feature type="chain" id="PRO_0000363054" description="S-adenosylmethionine synthase 1">
    <location>
        <begin position="1"/>
        <end position="391"/>
    </location>
</feature>
<feature type="binding site" evidence="3">
    <location>
        <position position="9"/>
    </location>
    <ligand>
        <name>Mg(2+)</name>
        <dbReference type="ChEBI" id="CHEBI:18420"/>
    </ligand>
</feature>
<feature type="binding site" description="in other chain" evidence="4">
    <location>
        <position position="15"/>
    </location>
    <ligand>
        <name>ATP</name>
        <dbReference type="ChEBI" id="CHEBI:30616"/>
        <note>ligand shared between two neighboring subunits</note>
    </ligand>
</feature>
<feature type="binding site" evidence="2">
    <location>
        <position position="43"/>
    </location>
    <ligand>
        <name>K(+)</name>
        <dbReference type="ChEBI" id="CHEBI:29103"/>
    </ligand>
</feature>
<feature type="binding site" description="in other chain" evidence="2">
    <location>
        <position position="56"/>
    </location>
    <ligand>
        <name>L-methionine</name>
        <dbReference type="ChEBI" id="CHEBI:57844"/>
        <note>ligand shared between two neighboring subunits</note>
    </ligand>
</feature>
<feature type="binding site" description="in other chain" evidence="2">
    <location>
        <position position="99"/>
    </location>
    <ligand>
        <name>L-methionine</name>
        <dbReference type="ChEBI" id="CHEBI:57844"/>
        <note>ligand shared between two neighboring subunits</note>
    </ligand>
</feature>
<feature type="binding site" description="in other chain" evidence="4">
    <location>
        <begin position="167"/>
        <end position="169"/>
    </location>
    <ligand>
        <name>ATP</name>
        <dbReference type="ChEBI" id="CHEBI:30616"/>
        <note>ligand shared between two neighboring subunits</note>
    </ligand>
</feature>
<feature type="binding site" description="in other chain" evidence="4">
    <location>
        <begin position="235"/>
        <end position="238"/>
    </location>
    <ligand>
        <name>ATP</name>
        <dbReference type="ChEBI" id="CHEBI:30616"/>
        <note>ligand shared between two neighboring subunits</note>
    </ligand>
</feature>
<feature type="binding site" description="in other chain" evidence="4">
    <location>
        <position position="246"/>
    </location>
    <ligand>
        <name>ATP</name>
        <dbReference type="ChEBI" id="CHEBI:30616"/>
        <note>ligand shared between two neighboring subunits</note>
    </ligand>
</feature>
<feature type="binding site" evidence="2">
    <location>
        <position position="246"/>
    </location>
    <ligand>
        <name>L-methionine</name>
        <dbReference type="ChEBI" id="CHEBI:57844"/>
        <note>ligand shared between two neighboring subunits</note>
    </ligand>
</feature>
<feature type="binding site" description="in other chain" evidence="2">
    <location>
        <begin position="252"/>
        <end position="253"/>
    </location>
    <ligand>
        <name>ATP</name>
        <dbReference type="ChEBI" id="CHEBI:30616"/>
        <note>ligand shared between two neighboring subunits</note>
    </ligand>
</feature>
<feature type="binding site" evidence="2">
    <location>
        <position position="269"/>
    </location>
    <ligand>
        <name>ATP</name>
        <dbReference type="ChEBI" id="CHEBI:30616"/>
        <note>ligand shared between two neighboring subunits</note>
    </ligand>
</feature>
<feature type="binding site" evidence="2">
    <location>
        <position position="273"/>
    </location>
    <ligand>
        <name>ATP</name>
        <dbReference type="ChEBI" id="CHEBI:30616"/>
        <note>ligand shared between two neighboring subunits</note>
    </ligand>
</feature>
<feature type="binding site" evidence="3">
    <location>
        <position position="277"/>
    </location>
    <ligand>
        <name>ATP</name>
        <dbReference type="ChEBI" id="CHEBI:30616"/>
        <note>ligand shared between two neighboring subunits</note>
    </ligand>
</feature>
<feature type="binding site" description="in other chain" evidence="2">
    <location>
        <position position="277"/>
    </location>
    <ligand>
        <name>L-methionine</name>
        <dbReference type="ChEBI" id="CHEBI:57844"/>
        <note>ligand shared between two neighboring subunits</note>
    </ligand>
</feature>
<reference key="1">
    <citation type="journal article" date="2007" name="Nature">
        <title>The grapevine genome sequence suggests ancestral hexaploidization in major angiosperm phyla.</title>
        <authorList>
            <person name="Jaillon O."/>
            <person name="Aury J.-M."/>
            <person name="Noel B."/>
            <person name="Policriti A."/>
            <person name="Clepet C."/>
            <person name="Casagrande A."/>
            <person name="Choisne N."/>
            <person name="Aubourg S."/>
            <person name="Vitulo N."/>
            <person name="Jubin C."/>
            <person name="Vezzi A."/>
            <person name="Legeai F."/>
            <person name="Hugueney P."/>
            <person name="Dasilva C."/>
            <person name="Horner D."/>
            <person name="Mica E."/>
            <person name="Jublot D."/>
            <person name="Poulain J."/>
            <person name="Bruyere C."/>
            <person name="Billault A."/>
            <person name="Segurens B."/>
            <person name="Gouyvenoux M."/>
            <person name="Ugarte E."/>
            <person name="Cattonaro F."/>
            <person name="Anthouard V."/>
            <person name="Vico V."/>
            <person name="Del Fabbro C."/>
            <person name="Alaux M."/>
            <person name="Di Gaspero G."/>
            <person name="Dumas V."/>
            <person name="Felice N."/>
            <person name="Paillard S."/>
            <person name="Juman I."/>
            <person name="Moroldo M."/>
            <person name="Scalabrin S."/>
            <person name="Canaguier A."/>
            <person name="Le Clainche I."/>
            <person name="Malacrida G."/>
            <person name="Durand E."/>
            <person name="Pesole G."/>
            <person name="Laucou V."/>
            <person name="Chatelet P."/>
            <person name="Merdinoglu D."/>
            <person name="Delledonne M."/>
            <person name="Pezzotti M."/>
            <person name="Lecharny A."/>
            <person name="Scarpelli C."/>
            <person name="Artiguenave F."/>
            <person name="Pe M.E."/>
            <person name="Valle G."/>
            <person name="Morgante M."/>
            <person name="Caboche M."/>
            <person name="Adam-Blondon A.-F."/>
            <person name="Weissenbach J."/>
            <person name="Quetier F."/>
            <person name="Wincker P."/>
        </authorList>
    </citation>
    <scope>NUCLEOTIDE SEQUENCE [LARGE SCALE GENOMIC DNA]</scope>
    <source>
        <strain>cv. Pinot noir / PN40024</strain>
    </source>
</reference>
<reference key="2">
    <citation type="journal article" date="2007" name="PLoS ONE">
        <title>A high quality draft consensus sequence of the genome of a heterozygous grapevine variety.</title>
        <authorList>
            <person name="Velasco R."/>
            <person name="Zharkikh A."/>
            <person name="Troggio M."/>
            <person name="Cartwright D.A."/>
            <person name="Cestaro A."/>
            <person name="Pruss D."/>
            <person name="Pindo M."/>
            <person name="FitzGerald L.M."/>
            <person name="Vezzulli S."/>
            <person name="Reid J."/>
            <person name="Malacarne G."/>
            <person name="Iliev D."/>
            <person name="Coppola G."/>
            <person name="Wardell B."/>
            <person name="Micheletti D."/>
            <person name="Macalma T."/>
            <person name="Facci M."/>
            <person name="Mitchell J.T."/>
            <person name="Perazzolli M."/>
            <person name="Eldredge G."/>
            <person name="Gatto P."/>
            <person name="Oyzerski R."/>
            <person name="Moretto M."/>
            <person name="Gutin N."/>
            <person name="Stefanini M."/>
            <person name="Chen Y."/>
            <person name="Segala C."/>
            <person name="Davenport C."/>
            <person name="Dematte L."/>
            <person name="Mraz A."/>
            <person name="Battilana J."/>
            <person name="Stormo K."/>
            <person name="Costa F."/>
            <person name="Tao Q."/>
            <person name="Si-Ammour A."/>
            <person name="Harkins T."/>
            <person name="Lackey A."/>
            <person name="Perbost C."/>
            <person name="Taillon B."/>
            <person name="Stella A."/>
            <person name="Solovyev V."/>
            <person name="Fawcett J.A."/>
            <person name="Sterck L."/>
            <person name="Vandepoele K."/>
            <person name="Grando S.M."/>
            <person name="Toppo S."/>
            <person name="Moser C."/>
            <person name="Lanchbury J."/>
            <person name="Bogden R."/>
            <person name="Skolnick M."/>
            <person name="Sgaramella V."/>
            <person name="Bhatnagar S.K."/>
            <person name="Fontana P."/>
            <person name="Gutin A."/>
            <person name="Van de Peer Y."/>
            <person name="Salamini F."/>
            <person name="Viola R."/>
        </authorList>
    </citation>
    <scope>NUCLEOTIDE SEQUENCE [LARGE SCALE GENOMIC DNA]</scope>
    <source>
        <strain>cv. Pinot noir</strain>
    </source>
</reference>
<accession>A7PQS0</accession>
<accession>A5B7G7</accession>
<accession>F6GW95</accession>